<proteinExistence type="inferred from homology"/>
<accession>Q2RKX8</accession>
<dbReference type="EC" id="3.6.5.n1" evidence="1"/>
<dbReference type="EMBL" id="CP000232">
    <property type="protein sequence ID" value="ABC18911.1"/>
    <property type="molecule type" value="Genomic_DNA"/>
</dbReference>
<dbReference type="RefSeq" id="YP_429454.1">
    <property type="nucleotide sequence ID" value="NC_007644.1"/>
</dbReference>
<dbReference type="SMR" id="Q2RKX8"/>
<dbReference type="STRING" id="264732.Moth_0581"/>
<dbReference type="EnsemblBacteria" id="ABC18911">
    <property type="protein sequence ID" value="ABC18911"/>
    <property type="gene ID" value="Moth_0581"/>
</dbReference>
<dbReference type="KEGG" id="mta:Moth_0581"/>
<dbReference type="PATRIC" id="fig|264732.11.peg.625"/>
<dbReference type="eggNOG" id="COG0481">
    <property type="taxonomic scope" value="Bacteria"/>
</dbReference>
<dbReference type="HOGENOM" id="CLU_009995_3_3_9"/>
<dbReference type="OrthoDB" id="9801591at2"/>
<dbReference type="GO" id="GO:0005886">
    <property type="term" value="C:plasma membrane"/>
    <property type="evidence" value="ECO:0007669"/>
    <property type="project" value="UniProtKB-SubCell"/>
</dbReference>
<dbReference type="GO" id="GO:0005525">
    <property type="term" value="F:GTP binding"/>
    <property type="evidence" value="ECO:0007669"/>
    <property type="project" value="UniProtKB-UniRule"/>
</dbReference>
<dbReference type="GO" id="GO:0003924">
    <property type="term" value="F:GTPase activity"/>
    <property type="evidence" value="ECO:0007669"/>
    <property type="project" value="UniProtKB-UniRule"/>
</dbReference>
<dbReference type="GO" id="GO:0043022">
    <property type="term" value="F:ribosome binding"/>
    <property type="evidence" value="ECO:0007669"/>
    <property type="project" value="UniProtKB-UniRule"/>
</dbReference>
<dbReference type="GO" id="GO:0003746">
    <property type="term" value="F:translation elongation factor activity"/>
    <property type="evidence" value="ECO:0007669"/>
    <property type="project" value="UniProtKB-UniRule"/>
</dbReference>
<dbReference type="GO" id="GO:0045727">
    <property type="term" value="P:positive regulation of translation"/>
    <property type="evidence" value="ECO:0007669"/>
    <property type="project" value="UniProtKB-UniRule"/>
</dbReference>
<dbReference type="CDD" id="cd03699">
    <property type="entry name" value="EF4_II"/>
    <property type="match status" value="1"/>
</dbReference>
<dbReference type="CDD" id="cd16260">
    <property type="entry name" value="EF4_III"/>
    <property type="match status" value="1"/>
</dbReference>
<dbReference type="CDD" id="cd01890">
    <property type="entry name" value="LepA"/>
    <property type="match status" value="1"/>
</dbReference>
<dbReference type="CDD" id="cd03709">
    <property type="entry name" value="lepA_C"/>
    <property type="match status" value="1"/>
</dbReference>
<dbReference type="FunFam" id="3.40.50.300:FF:000078">
    <property type="entry name" value="Elongation factor 4"/>
    <property type="match status" value="1"/>
</dbReference>
<dbReference type="FunFam" id="2.40.30.10:FF:000015">
    <property type="entry name" value="Translation factor GUF1, mitochondrial"/>
    <property type="match status" value="1"/>
</dbReference>
<dbReference type="FunFam" id="3.30.70.240:FF:000007">
    <property type="entry name" value="Translation factor GUF1, mitochondrial"/>
    <property type="match status" value="1"/>
</dbReference>
<dbReference type="FunFam" id="3.30.70.2570:FF:000001">
    <property type="entry name" value="Translation factor GUF1, mitochondrial"/>
    <property type="match status" value="1"/>
</dbReference>
<dbReference type="FunFam" id="3.30.70.870:FF:000004">
    <property type="entry name" value="Translation factor GUF1, mitochondrial"/>
    <property type="match status" value="1"/>
</dbReference>
<dbReference type="Gene3D" id="3.30.70.240">
    <property type="match status" value="1"/>
</dbReference>
<dbReference type="Gene3D" id="3.30.70.2570">
    <property type="entry name" value="Elongation factor 4, C-terminal domain"/>
    <property type="match status" value="1"/>
</dbReference>
<dbReference type="Gene3D" id="3.30.70.870">
    <property type="entry name" value="Elongation Factor G (Translational Gtpase), domain 3"/>
    <property type="match status" value="1"/>
</dbReference>
<dbReference type="Gene3D" id="3.40.50.300">
    <property type="entry name" value="P-loop containing nucleotide triphosphate hydrolases"/>
    <property type="match status" value="1"/>
</dbReference>
<dbReference type="Gene3D" id="2.40.30.10">
    <property type="entry name" value="Translation factors"/>
    <property type="match status" value="1"/>
</dbReference>
<dbReference type="HAMAP" id="MF_00071">
    <property type="entry name" value="LepA"/>
    <property type="match status" value="1"/>
</dbReference>
<dbReference type="InterPro" id="IPR006297">
    <property type="entry name" value="EF-4"/>
</dbReference>
<dbReference type="InterPro" id="IPR035647">
    <property type="entry name" value="EFG_III/V"/>
</dbReference>
<dbReference type="InterPro" id="IPR000640">
    <property type="entry name" value="EFG_V-like"/>
</dbReference>
<dbReference type="InterPro" id="IPR004161">
    <property type="entry name" value="EFTu-like_2"/>
</dbReference>
<dbReference type="InterPro" id="IPR031157">
    <property type="entry name" value="G_TR_CS"/>
</dbReference>
<dbReference type="InterPro" id="IPR038363">
    <property type="entry name" value="LepA_C_sf"/>
</dbReference>
<dbReference type="InterPro" id="IPR013842">
    <property type="entry name" value="LepA_CTD"/>
</dbReference>
<dbReference type="InterPro" id="IPR035654">
    <property type="entry name" value="LepA_IV"/>
</dbReference>
<dbReference type="InterPro" id="IPR027417">
    <property type="entry name" value="P-loop_NTPase"/>
</dbReference>
<dbReference type="InterPro" id="IPR005225">
    <property type="entry name" value="Small_GTP-bd"/>
</dbReference>
<dbReference type="InterPro" id="IPR000795">
    <property type="entry name" value="T_Tr_GTP-bd_dom"/>
</dbReference>
<dbReference type="InterPro" id="IPR009000">
    <property type="entry name" value="Transl_B-barrel_sf"/>
</dbReference>
<dbReference type="NCBIfam" id="TIGR01393">
    <property type="entry name" value="lepA"/>
    <property type="match status" value="1"/>
</dbReference>
<dbReference type="NCBIfam" id="TIGR00231">
    <property type="entry name" value="small_GTP"/>
    <property type="match status" value="1"/>
</dbReference>
<dbReference type="PANTHER" id="PTHR43512:SF4">
    <property type="entry name" value="TRANSLATION FACTOR GUF1 HOMOLOG, CHLOROPLASTIC"/>
    <property type="match status" value="1"/>
</dbReference>
<dbReference type="PANTHER" id="PTHR43512">
    <property type="entry name" value="TRANSLATION FACTOR GUF1-RELATED"/>
    <property type="match status" value="1"/>
</dbReference>
<dbReference type="Pfam" id="PF00679">
    <property type="entry name" value="EFG_C"/>
    <property type="match status" value="1"/>
</dbReference>
<dbReference type="Pfam" id="PF00009">
    <property type="entry name" value="GTP_EFTU"/>
    <property type="match status" value="1"/>
</dbReference>
<dbReference type="Pfam" id="PF03144">
    <property type="entry name" value="GTP_EFTU_D2"/>
    <property type="match status" value="1"/>
</dbReference>
<dbReference type="Pfam" id="PF06421">
    <property type="entry name" value="LepA_C"/>
    <property type="match status" value="1"/>
</dbReference>
<dbReference type="PRINTS" id="PR00315">
    <property type="entry name" value="ELONGATNFCT"/>
</dbReference>
<dbReference type="SMART" id="SM00838">
    <property type="entry name" value="EFG_C"/>
    <property type="match status" value="1"/>
</dbReference>
<dbReference type="SUPFAM" id="SSF54980">
    <property type="entry name" value="EF-G C-terminal domain-like"/>
    <property type="match status" value="2"/>
</dbReference>
<dbReference type="SUPFAM" id="SSF52540">
    <property type="entry name" value="P-loop containing nucleoside triphosphate hydrolases"/>
    <property type="match status" value="1"/>
</dbReference>
<dbReference type="SUPFAM" id="SSF50447">
    <property type="entry name" value="Translation proteins"/>
    <property type="match status" value="1"/>
</dbReference>
<dbReference type="PROSITE" id="PS00301">
    <property type="entry name" value="G_TR_1"/>
    <property type="match status" value="1"/>
</dbReference>
<dbReference type="PROSITE" id="PS51722">
    <property type="entry name" value="G_TR_2"/>
    <property type="match status" value="1"/>
</dbReference>
<reference key="1">
    <citation type="journal article" date="2008" name="Environ. Microbiol.">
        <title>The complete genome sequence of Moorella thermoacetica (f. Clostridium thermoaceticum).</title>
        <authorList>
            <person name="Pierce E."/>
            <person name="Xie G."/>
            <person name="Barabote R.D."/>
            <person name="Saunders E."/>
            <person name="Han C.S."/>
            <person name="Detter J.C."/>
            <person name="Richardson P."/>
            <person name="Brettin T.S."/>
            <person name="Das A."/>
            <person name="Ljungdahl L.G."/>
            <person name="Ragsdale S.W."/>
        </authorList>
    </citation>
    <scope>NUCLEOTIDE SEQUENCE [LARGE SCALE GENOMIC DNA]</scope>
    <source>
        <strain>ATCC 39073 / JCM 9320</strain>
    </source>
</reference>
<protein>
    <recommendedName>
        <fullName evidence="1">Elongation factor 4</fullName>
        <shortName evidence="1">EF-4</shortName>
        <ecNumber evidence="1">3.6.5.n1</ecNumber>
    </recommendedName>
    <alternativeName>
        <fullName evidence="1">Ribosomal back-translocase LepA</fullName>
    </alternativeName>
</protein>
<evidence type="ECO:0000255" key="1">
    <source>
        <dbReference type="HAMAP-Rule" id="MF_00071"/>
    </source>
</evidence>
<gene>
    <name evidence="1" type="primary">lepA</name>
    <name type="ordered locus">Moth_0581</name>
</gene>
<organism>
    <name type="scientific">Moorella thermoacetica (strain ATCC 39073 / JCM 9320)</name>
    <dbReference type="NCBI Taxonomy" id="264732"/>
    <lineage>
        <taxon>Bacteria</taxon>
        <taxon>Bacillati</taxon>
        <taxon>Bacillota</taxon>
        <taxon>Clostridia</taxon>
        <taxon>Moorellales</taxon>
        <taxon>Moorellaceae</taxon>
        <taxon>Moorella</taxon>
    </lineage>
</organism>
<sequence length="602" mass="67230">MSVEQKYIRNFCIIAHIDHGKSTLADRLLEYTGALSKREMVDQVLDTMDLERERGITIKLQAVRLHYKARDGQEYVLNLIDTPGHVDFTYEVSRSLAACEGALLVVDAAQGIEAQTLANVYLALEHNLEIIPVINKIDLPSAEPERVRREIEDVIGLDASEAILASAKTGVGTEEILEAIIRRVPPPRGDGEAPLQALIFDSIFDSYRGAIPYFRVVQGRVRKGDRIRFMATGAEFEVNEVGVFTPAPRPVESLAAGEVGFLSASIKNVKDTRVGDTITSAERPAPAPLPGYRKVMPMVYCGLFPVESERYDDLRDALEKLQLNDASLTFETETSVALGFGFRCGFLGLLHMEIIQERLEREYGLELITTAPSVVYRVVGTNGSVIMVDNPTALPAPNLIDHIEEPFVEATIMTPKDFVGPVMELCQEKRGSFLNMDYLSEKRVALKYDLPLAEIIYDFFDQLKSRTRGYASLDYSLKGYRPSELVKMDILVNNEVVDALSLITHRDQAYQRGRALVERLRQLIPRQLFDVPIQAAIGSRVIARETIPALRKNVLAKCYGGDVTRKRKLLEKQKEGKKRMKQVGTVDIPQEAFMAVLKAGKS</sequence>
<name>LEPA_MOOTA</name>
<keyword id="KW-1003">Cell membrane</keyword>
<keyword id="KW-0342">GTP-binding</keyword>
<keyword id="KW-0378">Hydrolase</keyword>
<keyword id="KW-0472">Membrane</keyword>
<keyword id="KW-0547">Nucleotide-binding</keyword>
<keyword id="KW-0648">Protein biosynthesis</keyword>
<feature type="chain" id="PRO_0000265675" description="Elongation factor 4">
    <location>
        <begin position="1"/>
        <end position="602"/>
    </location>
</feature>
<feature type="domain" description="tr-type G">
    <location>
        <begin position="6"/>
        <end position="188"/>
    </location>
</feature>
<feature type="binding site" evidence="1">
    <location>
        <begin position="18"/>
        <end position="23"/>
    </location>
    <ligand>
        <name>GTP</name>
        <dbReference type="ChEBI" id="CHEBI:37565"/>
    </ligand>
</feature>
<feature type="binding site" evidence="1">
    <location>
        <begin position="135"/>
        <end position="138"/>
    </location>
    <ligand>
        <name>GTP</name>
        <dbReference type="ChEBI" id="CHEBI:37565"/>
    </ligand>
</feature>
<comment type="function">
    <text evidence="1">Required for accurate and efficient protein synthesis under certain stress conditions. May act as a fidelity factor of the translation reaction, by catalyzing a one-codon backward translocation of tRNAs on improperly translocated ribosomes. Back-translocation proceeds from a post-translocation (POST) complex to a pre-translocation (PRE) complex, thus giving elongation factor G a second chance to translocate the tRNAs correctly. Binds to ribosomes in a GTP-dependent manner.</text>
</comment>
<comment type="catalytic activity">
    <reaction evidence="1">
        <text>GTP + H2O = GDP + phosphate + H(+)</text>
        <dbReference type="Rhea" id="RHEA:19669"/>
        <dbReference type="ChEBI" id="CHEBI:15377"/>
        <dbReference type="ChEBI" id="CHEBI:15378"/>
        <dbReference type="ChEBI" id="CHEBI:37565"/>
        <dbReference type="ChEBI" id="CHEBI:43474"/>
        <dbReference type="ChEBI" id="CHEBI:58189"/>
        <dbReference type="EC" id="3.6.5.n1"/>
    </reaction>
</comment>
<comment type="subcellular location">
    <subcellularLocation>
        <location evidence="1">Cell membrane</location>
        <topology evidence="1">Peripheral membrane protein</topology>
        <orientation evidence="1">Cytoplasmic side</orientation>
    </subcellularLocation>
</comment>
<comment type="similarity">
    <text evidence="1">Belongs to the TRAFAC class translation factor GTPase superfamily. Classic translation factor GTPase family. LepA subfamily.</text>
</comment>